<gene>
    <name type="ordered locus">Gura_4138</name>
</gene>
<proteinExistence type="inferred from homology"/>
<keyword id="KW-0378">Hydrolase</keyword>
<keyword id="KW-0479">Metal-binding</keyword>
<keyword id="KW-0482">Metalloprotease</keyword>
<keyword id="KW-0645">Protease</keyword>
<keyword id="KW-1185">Reference proteome</keyword>
<keyword id="KW-0862">Zinc</keyword>
<sequence length="228" mass="25331">MSGGIKQWPEDERPREKLLKRGAKALSDAELLALIIGTGDSSSGRSALDIGREMLQDFGGLRNLAHATASEICRIKGAGPAKAACIKAALELANRYGARRFESLERFTSPSQVFEHFHHEFRDHRKEYFLTLLLDGKNRILKRVQISEGSLNQSIVHPREVFNQAVRESAAAIILVHNHPTGDPTPSREDIDITRRLREAGDLLGIKVLDHIIIGDGSFLSFVDRGMM</sequence>
<dbReference type="EMBL" id="CP000698">
    <property type="protein sequence ID" value="ABQ28281.1"/>
    <property type="molecule type" value="Genomic_DNA"/>
</dbReference>
<dbReference type="RefSeq" id="WP_011940915.1">
    <property type="nucleotide sequence ID" value="NC_009483.1"/>
</dbReference>
<dbReference type="SMR" id="A5G913"/>
<dbReference type="STRING" id="351605.Gura_4138"/>
<dbReference type="KEGG" id="gur:Gura_4138"/>
<dbReference type="HOGENOM" id="CLU_073529_0_2_7"/>
<dbReference type="OrthoDB" id="9804482at2"/>
<dbReference type="Proteomes" id="UP000006695">
    <property type="component" value="Chromosome"/>
</dbReference>
<dbReference type="GO" id="GO:0046872">
    <property type="term" value="F:metal ion binding"/>
    <property type="evidence" value="ECO:0007669"/>
    <property type="project" value="UniProtKB-KW"/>
</dbReference>
<dbReference type="GO" id="GO:0008237">
    <property type="term" value="F:metallopeptidase activity"/>
    <property type="evidence" value="ECO:0007669"/>
    <property type="project" value="UniProtKB-KW"/>
</dbReference>
<dbReference type="GO" id="GO:0006508">
    <property type="term" value="P:proteolysis"/>
    <property type="evidence" value="ECO:0007669"/>
    <property type="project" value="UniProtKB-KW"/>
</dbReference>
<dbReference type="CDD" id="cd08071">
    <property type="entry name" value="MPN_DUF2466"/>
    <property type="match status" value="1"/>
</dbReference>
<dbReference type="Gene3D" id="1.10.150.20">
    <property type="entry name" value="5' to 3' exonuclease, C-terminal subdomain"/>
    <property type="match status" value="1"/>
</dbReference>
<dbReference type="Gene3D" id="3.40.140.10">
    <property type="entry name" value="Cytidine Deaminase, domain 2"/>
    <property type="match status" value="1"/>
</dbReference>
<dbReference type="InterPro" id="IPR037518">
    <property type="entry name" value="MPN"/>
</dbReference>
<dbReference type="InterPro" id="IPR025657">
    <property type="entry name" value="RadC_JAB"/>
</dbReference>
<dbReference type="InterPro" id="IPR010994">
    <property type="entry name" value="RuvA_2-like"/>
</dbReference>
<dbReference type="InterPro" id="IPR001405">
    <property type="entry name" value="UPF0758"/>
</dbReference>
<dbReference type="InterPro" id="IPR046778">
    <property type="entry name" value="UPF0758_N"/>
</dbReference>
<dbReference type="NCBIfam" id="NF000642">
    <property type="entry name" value="PRK00024.1"/>
    <property type="match status" value="1"/>
</dbReference>
<dbReference type="NCBIfam" id="TIGR00608">
    <property type="entry name" value="radc"/>
    <property type="match status" value="1"/>
</dbReference>
<dbReference type="PANTHER" id="PTHR30471">
    <property type="entry name" value="DNA REPAIR PROTEIN RADC"/>
    <property type="match status" value="1"/>
</dbReference>
<dbReference type="PANTHER" id="PTHR30471:SF3">
    <property type="entry name" value="UPF0758 PROTEIN YEES-RELATED"/>
    <property type="match status" value="1"/>
</dbReference>
<dbReference type="Pfam" id="PF04002">
    <property type="entry name" value="RadC"/>
    <property type="match status" value="1"/>
</dbReference>
<dbReference type="Pfam" id="PF20582">
    <property type="entry name" value="UPF0758_N"/>
    <property type="match status" value="1"/>
</dbReference>
<dbReference type="SUPFAM" id="SSF102712">
    <property type="entry name" value="JAB1/MPN domain"/>
    <property type="match status" value="1"/>
</dbReference>
<dbReference type="SUPFAM" id="SSF47781">
    <property type="entry name" value="RuvA domain 2-like"/>
    <property type="match status" value="1"/>
</dbReference>
<dbReference type="PROSITE" id="PS50249">
    <property type="entry name" value="MPN"/>
    <property type="match status" value="1"/>
</dbReference>
<evidence type="ECO:0000255" key="1">
    <source>
        <dbReference type="PROSITE-ProRule" id="PRU01182"/>
    </source>
</evidence>
<evidence type="ECO:0000305" key="2"/>
<reference key="1">
    <citation type="submission" date="2007-05" db="EMBL/GenBank/DDBJ databases">
        <title>Complete sequence of Geobacter uraniireducens Rf4.</title>
        <authorList>
            <consortium name="US DOE Joint Genome Institute"/>
            <person name="Copeland A."/>
            <person name="Lucas S."/>
            <person name="Lapidus A."/>
            <person name="Barry K."/>
            <person name="Detter J.C."/>
            <person name="Glavina del Rio T."/>
            <person name="Hammon N."/>
            <person name="Israni S."/>
            <person name="Dalin E."/>
            <person name="Tice H."/>
            <person name="Pitluck S."/>
            <person name="Chertkov O."/>
            <person name="Brettin T."/>
            <person name="Bruce D."/>
            <person name="Han C."/>
            <person name="Schmutz J."/>
            <person name="Larimer F."/>
            <person name="Land M."/>
            <person name="Hauser L."/>
            <person name="Kyrpides N."/>
            <person name="Mikhailova N."/>
            <person name="Shelobolina E."/>
            <person name="Aklujkar M."/>
            <person name="Lovley D."/>
            <person name="Richardson P."/>
        </authorList>
    </citation>
    <scope>NUCLEOTIDE SEQUENCE [LARGE SCALE GENOMIC DNA]</scope>
    <source>
        <strain>ATCC BAA-1134 / JCM 13001 / Rf4</strain>
    </source>
</reference>
<accession>A5G913</accession>
<feature type="chain" id="PRO_1000074144" description="UPF0758 protein Gura_4138">
    <location>
        <begin position="1"/>
        <end position="228"/>
    </location>
</feature>
<feature type="domain" description="MPN" evidence="1">
    <location>
        <begin position="106"/>
        <end position="228"/>
    </location>
</feature>
<feature type="short sequence motif" description="JAMM motif" evidence="1">
    <location>
        <begin position="177"/>
        <end position="190"/>
    </location>
</feature>
<feature type="binding site" evidence="1">
    <location>
        <position position="177"/>
    </location>
    <ligand>
        <name>Zn(2+)</name>
        <dbReference type="ChEBI" id="CHEBI:29105"/>
        <note>catalytic</note>
    </ligand>
</feature>
<feature type="binding site" evidence="1">
    <location>
        <position position="179"/>
    </location>
    <ligand>
        <name>Zn(2+)</name>
        <dbReference type="ChEBI" id="CHEBI:29105"/>
        <note>catalytic</note>
    </ligand>
</feature>
<feature type="binding site" evidence="1">
    <location>
        <position position="190"/>
    </location>
    <ligand>
        <name>Zn(2+)</name>
        <dbReference type="ChEBI" id="CHEBI:29105"/>
        <note>catalytic</note>
    </ligand>
</feature>
<organism>
    <name type="scientific">Geotalea uraniireducens (strain Rf4)</name>
    <name type="common">Geobacter uraniireducens</name>
    <dbReference type="NCBI Taxonomy" id="351605"/>
    <lineage>
        <taxon>Bacteria</taxon>
        <taxon>Pseudomonadati</taxon>
        <taxon>Thermodesulfobacteriota</taxon>
        <taxon>Desulfuromonadia</taxon>
        <taxon>Geobacterales</taxon>
        <taxon>Geobacteraceae</taxon>
        <taxon>Geotalea</taxon>
    </lineage>
</organism>
<protein>
    <recommendedName>
        <fullName>UPF0758 protein Gura_4138</fullName>
    </recommendedName>
</protein>
<name>Y4138_GEOUR</name>
<comment type="similarity">
    <text evidence="2">Belongs to the UPF0758 family.</text>
</comment>